<sequence>MLFTVAWASLAAMFSFSIAMVVWGRNGDGTLNF</sequence>
<keyword id="KW-0249">Electron transport</keyword>
<keyword id="KW-0472">Membrane</keyword>
<keyword id="KW-0602">Photosynthesis</keyword>
<keyword id="KW-0793">Thylakoid</keyword>
<keyword id="KW-0812">Transmembrane</keyword>
<keyword id="KW-1133">Transmembrane helix</keyword>
<keyword id="KW-0813">Transport</keyword>
<proteinExistence type="inferred from homology"/>
<feature type="chain" id="PRO_0000217142" description="Cytochrome b6-f complex subunit 8">
    <location>
        <begin position="1"/>
        <end position="33"/>
    </location>
</feature>
<feature type="transmembrane region" description="Helical" evidence="1">
    <location>
        <begin position="2"/>
        <end position="22"/>
    </location>
</feature>
<dbReference type="EMBL" id="BX569692">
    <property type="protein sequence ID" value="CAE07818.1"/>
    <property type="molecule type" value="Genomic_DNA"/>
</dbReference>
<dbReference type="RefSeq" id="WP_011128167.1">
    <property type="nucleotide sequence ID" value="NC_005070.1"/>
</dbReference>
<dbReference type="SMR" id="Q7U6N5"/>
<dbReference type="STRING" id="84588.SYNW1303"/>
<dbReference type="KEGG" id="syw:SYNW1303"/>
<dbReference type="eggNOG" id="ENOG502ZT1J">
    <property type="taxonomic scope" value="Bacteria"/>
</dbReference>
<dbReference type="HOGENOM" id="CLU_215774_0_0_3"/>
<dbReference type="BioCyc" id="MetaCyc:TX72_RS06550-MONOMER"/>
<dbReference type="Proteomes" id="UP000001422">
    <property type="component" value="Chromosome"/>
</dbReference>
<dbReference type="GO" id="GO:0009512">
    <property type="term" value="C:cytochrome b6f complex"/>
    <property type="evidence" value="ECO:0007669"/>
    <property type="project" value="InterPro"/>
</dbReference>
<dbReference type="GO" id="GO:0031676">
    <property type="term" value="C:plasma membrane-derived thylakoid membrane"/>
    <property type="evidence" value="ECO:0007669"/>
    <property type="project" value="UniProtKB-SubCell"/>
</dbReference>
<dbReference type="GO" id="GO:0045158">
    <property type="term" value="F:electron transporter, transferring electrons within cytochrome b6/f complex of photosystem II activity"/>
    <property type="evidence" value="ECO:0007669"/>
    <property type="project" value="InterPro"/>
</dbReference>
<dbReference type="GO" id="GO:0017004">
    <property type="term" value="P:cytochrome complex assembly"/>
    <property type="evidence" value="ECO:0007669"/>
    <property type="project" value="UniProtKB-UniRule"/>
</dbReference>
<dbReference type="GO" id="GO:0015979">
    <property type="term" value="P:photosynthesis"/>
    <property type="evidence" value="ECO:0007669"/>
    <property type="project" value="UniProtKB-KW"/>
</dbReference>
<dbReference type="HAMAP" id="MF_00395">
    <property type="entry name" value="Cytb6_f_PetN"/>
    <property type="match status" value="1"/>
</dbReference>
<dbReference type="InterPro" id="IPR036143">
    <property type="entry name" value="Cytochr_b6-f_cplx_su8_sf"/>
</dbReference>
<dbReference type="InterPro" id="IPR005497">
    <property type="entry name" value="Cytochrome_b6-f_cplx_su8"/>
</dbReference>
<dbReference type="NCBIfam" id="NF002709">
    <property type="entry name" value="PRK02529.1"/>
    <property type="match status" value="1"/>
</dbReference>
<dbReference type="Pfam" id="PF03742">
    <property type="entry name" value="PetN"/>
    <property type="match status" value="1"/>
</dbReference>
<dbReference type="SUPFAM" id="SSF103451">
    <property type="entry name" value="PetN subunit of the cytochrome b6f complex"/>
    <property type="match status" value="1"/>
</dbReference>
<gene>
    <name evidence="1" type="primary">petN</name>
    <name type="ordered locus">SYNW1303</name>
</gene>
<reference key="1">
    <citation type="journal article" date="2003" name="Nature">
        <title>The genome of a motile marine Synechococcus.</title>
        <authorList>
            <person name="Palenik B."/>
            <person name="Brahamsha B."/>
            <person name="Larimer F.W."/>
            <person name="Land M.L."/>
            <person name="Hauser L."/>
            <person name="Chain P."/>
            <person name="Lamerdin J.E."/>
            <person name="Regala W."/>
            <person name="Allen E.E."/>
            <person name="McCarren J."/>
            <person name="Paulsen I.T."/>
            <person name="Dufresne A."/>
            <person name="Partensky F."/>
            <person name="Webb E.A."/>
            <person name="Waterbury J."/>
        </authorList>
    </citation>
    <scope>NUCLEOTIDE SEQUENCE [LARGE SCALE GENOMIC DNA]</scope>
    <source>
        <strain>WH8102</strain>
    </source>
</reference>
<evidence type="ECO:0000255" key="1">
    <source>
        <dbReference type="HAMAP-Rule" id="MF_00395"/>
    </source>
</evidence>
<organism>
    <name type="scientific">Parasynechococcus marenigrum (strain WH8102)</name>
    <dbReference type="NCBI Taxonomy" id="84588"/>
    <lineage>
        <taxon>Bacteria</taxon>
        <taxon>Bacillati</taxon>
        <taxon>Cyanobacteriota</taxon>
        <taxon>Cyanophyceae</taxon>
        <taxon>Synechococcales</taxon>
        <taxon>Prochlorococcaceae</taxon>
        <taxon>Parasynechococcus</taxon>
        <taxon>Parasynechococcus marenigrum</taxon>
    </lineage>
</organism>
<protein>
    <recommendedName>
        <fullName evidence="1">Cytochrome b6-f complex subunit 8</fullName>
    </recommendedName>
    <alternativeName>
        <fullName evidence="1">Cytochrome b6-f complex subunit PetN</fullName>
    </alternativeName>
    <alternativeName>
        <fullName evidence="1">Cytochrome b6-f complex subunit VIII</fullName>
    </alternativeName>
</protein>
<comment type="function">
    <text evidence="1">Component of the cytochrome b6-f complex, which mediates electron transfer between photosystem II (PSII) and photosystem I (PSI), cyclic electron flow around PSI, and state transitions.</text>
</comment>
<comment type="subunit">
    <text evidence="1">The 4 large subunits of the cytochrome b6-f complex are cytochrome b6, subunit IV (17 kDa polypeptide, PetD), cytochrome f and the Rieske protein, while the 4 small subunits are PetG, PetL, PetM and PetN. The complex functions as a dimer.</text>
</comment>
<comment type="subcellular location">
    <subcellularLocation>
        <location evidence="1">Cellular thylakoid membrane</location>
        <topology evidence="1">Single-pass membrane protein</topology>
    </subcellularLocation>
</comment>
<comment type="similarity">
    <text evidence="1">Belongs to the PetN family.</text>
</comment>
<name>PETN_PARMW</name>
<accession>Q7U6N5</accession>